<sequence length="63" mass="7148">MSRRDDLTGKGPMFGNNRSHALNATRRRFNLNLQKVSVVVNGRKVNLKVSAKTAKTLRRKNLI</sequence>
<proteinExistence type="inferred from homology"/>
<accession>Q98PM6</accession>
<organism>
    <name type="scientific">Mycoplasmopsis pulmonis (strain UAB CTIP)</name>
    <name type="common">Mycoplasma pulmonis</name>
    <dbReference type="NCBI Taxonomy" id="272635"/>
    <lineage>
        <taxon>Bacteria</taxon>
        <taxon>Bacillati</taxon>
        <taxon>Mycoplasmatota</taxon>
        <taxon>Mycoplasmoidales</taxon>
        <taxon>Metamycoplasmataceae</taxon>
        <taxon>Mycoplasmopsis</taxon>
    </lineage>
</organism>
<evidence type="ECO:0000255" key="1">
    <source>
        <dbReference type="HAMAP-Rule" id="MF_00373"/>
    </source>
</evidence>
<evidence type="ECO:0000256" key="2">
    <source>
        <dbReference type="SAM" id="MobiDB-lite"/>
    </source>
</evidence>
<evidence type="ECO:0000305" key="3"/>
<gene>
    <name evidence="1" type="primary">rpmB</name>
    <name type="ordered locus">MYPU_6960</name>
</gene>
<protein>
    <recommendedName>
        <fullName evidence="1">Large ribosomal subunit protein bL28</fullName>
    </recommendedName>
    <alternativeName>
        <fullName evidence="3">50S ribosomal protein L28</fullName>
    </alternativeName>
</protein>
<reference key="1">
    <citation type="journal article" date="2001" name="Nucleic Acids Res.">
        <title>The complete genome sequence of the murine respiratory pathogen Mycoplasma pulmonis.</title>
        <authorList>
            <person name="Chambaud I."/>
            <person name="Heilig R."/>
            <person name="Ferris S."/>
            <person name="Barbe V."/>
            <person name="Samson D."/>
            <person name="Galisson F."/>
            <person name="Moszer I."/>
            <person name="Dybvig K."/>
            <person name="Wroblewski H."/>
            <person name="Viari A."/>
            <person name="Rocha E.P.C."/>
            <person name="Blanchard A."/>
        </authorList>
    </citation>
    <scope>NUCLEOTIDE SEQUENCE [LARGE SCALE GENOMIC DNA]</scope>
    <source>
        <strain>UAB CTIP</strain>
    </source>
</reference>
<comment type="similarity">
    <text evidence="1">Belongs to the bacterial ribosomal protein bL28 family.</text>
</comment>
<keyword id="KW-1185">Reference proteome</keyword>
<keyword id="KW-0687">Ribonucleoprotein</keyword>
<keyword id="KW-0689">Ribosomal protein</keyword>
<name>RL28_MYCPU</name>
<feature type="chain" id="PRO_0000178511" description="Large ribosomal subunit protein bL28">
    <location>
        <begin position="1"/>
        <end position="63"/>
    </location>
</feature>
<feature type="region of interest" description="Disordered" evidence="2">
    <location>
        <begin position="1"/>
        <end position="21"/>
    </location>
</feature>
<dbReference type="EMBL" id="AL445565">
    <property type="protein sequence ID" value="CAC13869.1"/>
    <property type="molecule type" value="Genomic_DNA"/>
</dbReference>
<dbReference type="PIR" id="H90598">
    <property type="entry name" value="H90598"/>
</dbReference>
<dbReference type="RefSeq" id="WP_010925497.1">
    <property type="nucleotide sequence ID" value="NC_002771.1"/>
</dbReference>
<dbReference type="SMR" id="Q98PM6"/>
<dbReference type="STRING" id="272635.gene:17577307"/>
<dbReference type="KEGG" id="mpu:MYPU_6960"/>
<dbReference type="eggNOG" id="COG0227">
    <property type="taxonomic scope" value="Bacteria"/>
</dbReference>
<dbReference type="HOGENOM" id="CLU_064548_7_2_14"/>
<dbReference type="BioCyc" id="MPUL272635:G1GT6-710-MONOMER"/>
<dbReference type="Proteomes" id="UP000000528">
    <property type="component" value="Chromosome"/>
</dbReference>
<dbReference type="GO" id="GO:1990904">
    <property type="term" value="C:ribonucleoprotein complex"/>
    <property type="evidence" value="ECO:0007669"/>
    <property type="project" value="UniProtKB-KW"/>
</dbReference>
<dbReference type="GO" id="GO:0005840">
    <property type="term" value="C:ribosome"/>
    <property type="evidence" value="ECO:0007669"/>
    <property type="project" value="UniProtKB-KW"/>
</dbReference>
<dbReference type="GO" id="GO:0003735">
    <property type="term" value="F:structural constituent of ribosome"/>
    <property type="evidence" value="ECO:0007669"/>
    <property type="project" value="InterPro"/>
</dbReference>
<dbReference type="GO" id="GO:0006412">
    <property type="term" value="P:translation"/>
    <property type="evidence" value="ECO:0007669"/>
    <property type="project" value="UniProtKB-UniRule"/>
</dbReference>
<dbReference type="Gene3D" id="2.30.170.40">
    <property type="entry name" value="Ribosomal protein L28/L24"/>
    <property type="match status" value="1"/>
</dbReference>
<dbReference type="HAMAP" id="MF_00373">
    <property type="entry name" value="Ribosomal_bL28"/>
    <property type="match status" value="1"/>
</dbReference>
<dbReference type="InterPro" id="IPR050096">
    <property type="entry name" value="Bacterial_rp_bL28"/>
</dbReference>
<dbReference type="InterPro" id="IPR026569">
    <property type="entry name" value="Ribosomal_bL28"/>
</dbReference>
<dbReference type="InterPro" id="IPR034704">
    <property type="entry name" value="Ribosomal_bL28/bL31-like_sf"/>
</dbReference>
<dbReference type="InterPro" id="IPR001383">
    <property type="entry name" value="Ribosomal_bL28_bact-type"/>
</dbReference>
<dbReference type="InterPro" id="IPR037147">
    <property type="entry name" value="Ribosomal_bL28_sf"/>
</dbReference>
<dbReference type="NCBIfam" id="TIGR00009">
    <property type="entry name" value="L28"/>
    <property type="match status" value="1"/>
</dbReference>
<dbReference type="PANTHER" id="PTHR39080">
    <property type="entry name" value="50S RIBOSOMAL PROTEIN L28"/>
    <property type="match status" value="1"/>
</dbReference>
<dbReference type="PANTHER" id="PTHR39080:SF1">
    <property type="entry name" value="LARGE RIBOSOMAL SUBUNIT PROTEIN BL28A"/>
    <property type="match status" value="1"/>
</dbReference>
<dbReference type="Pfam" id="PF00830">
    <property type="entry name" value="Ribosomal_L28"/>
    <property type="match status" value="1"/>
</dbReference>
<dbReference type="SUPFAM" id="SSF143800">
    <property type="entry name" value="L28p-like"/>
    <property type="match status" value="1"/>
</dbReference>